<comment type="function">
    <text evidence="1">Capsid protein self-assembles to form an icosahedral capsid with a T=1 symmetry, about 22 nm in diameter, and consisting of 60 copies of two size variants of the capsid proteins, VP1 and VP2, which differ by the presence of an N-terminal extension in the minor protein VP1. The capsid encapsulates the genomic ssDNA. Capsid proteins are responsible for the attachment to host cell receptor TFRC. This attachment induces virion internalization predominantly through clathrin-endocytosis. Binding to the host receptors also induces capsid rearrangements leading to surface exposure of VP1 N-terminus, specifically its phospholipase A2-like region and nuclear localization signal(s). VP1 N-terminus might serve as a lipolytic enzyme to breach the endosomal membrane during entry into host cell. Intracytoplasmic transport involves microtubules and interaction between capsid proteins and host dynein. Exposure of nuclear localization signal probably allows nuclear import of capsids (By similarity).</text>
</comment>
<comment type="subunit">
    <text evidence="1">Interacts with host TFRC.</text>
</comment>
<comment type="subcellular location">
    <subcellularLocation>
        <location evidence="1">Virion</location>
    </subcellularLocation>
    <subcellularLocation>
        <location evidence="4">Host nucleus</location>
    </subcellularLocation>
</comment>
<comment type="alternative products">
    <event type="alternative splicing"/>
    <isoform>
        <id>Q11213-1</id>
        <name>VP1</name>
        <sequence type="displayed"/>
    </isoform>
    <isoform>
        <id>Q11213-2</id>
        <name>VP2</name>
        <sequence type="described" ref="VSP_041138"/>
    </isoform>
</comment>
<comment type="domain">
    <text evidence="1">The N-terminus of VP1 is sequestered within the mature capsid. It contains a phospholipase A2-like region and nuclear localization signals that might be exposed by capsid modifications during virus entry (By similarity).</text>
</comment>
<comment type="miscellaneous">
    <text evidence="1">The capsids of autonomous parvoviruses expose a proportion of VP2 N-terminus and part of that sequence can be cleaved of to form VP3.</text>
</comment>
<comment type="miscellaneous">
    <molecule>Isoform VP1</molecule>
    <text>Minor splicing isoform.</text>
</comment>
<comment type="miscellaneous">
    <molecule>Isoform VP2</molecule>
    <text evidence="4">Major splicing isoform produced by deletion of the initiating AUG for VP1 and downstream translation of VP2.</text>
</comment>
<comment type="similarity">
    <text evidence="4">Belongs to the parvoviridae capsid protein family.</text>
</comment>
<accession>Q11213</accession>
<name>CAPSD_PAVCB</name>
<keyword id="KW-0002">3D-structure</keyword>
<keyword id="KW-0025">Alternative splicing</keyword>
<keyword id="KW-0167">Capsid protein</keyword>
<keyword id="KW-1165">Clathrin-mediated endocytosis of virus by host</keyword>
<keyword id="KW-1176">Cytoplasmic inwards viral transport</keyword>
<keyword id="KW-1015">Disulfide bond</keyword>
<keyword id="KW-1048">Host nucleus</keyword>
<keyword id="KW-0945">Host-virus interaction</keyword>
<keyword id="KW-0460">Magnesium</keyword>
<keyword id="KW-0479">Metal-binding</keyword>
<keyword id="KW-1177">Microtubular inwards viral transport</keyword>
<keyword id="KW-1140">T=1 icosahedral capsid protein</keyword>
<keyword id="KW-1233">Viral attachment to host adhesion receptor</keyword>
<keyword id="KW-1161">Viral attachment to host cell</keyword>
<keyword id="KW-1234">Viral attachment to host entry receptor</keyword>
<keyword id="KW-1162">Viral penetration into host cytoplasm</keyword>
<keyword id="KW-1163">Viral penetration into host nucleus</keyword>
<keyword id="KW-1173">Viral penetration via permeabilization of host membrane</keyword>
<keyword id="KW-0946">Virion</keyword>
<keyword id="KW-1164">Virus endocytosis by host</keyword>
<keyword id="KW-1160">Virus entry into host cell</keyword>
<feature type="chain" id="PRO_0000039427" description="Capsid protein VP1">
    <location>
        <begin position="1"/>
        <end position="727"/>
    </location>
</feature>
<feature type="region of interest" description="Disordered" evidence="3">
    <location>
        <begin position="1"/>
        <end position="39"/>
    </location>
</feature>
<feature type="region of interest" description="Phospholipase A2-like" evidence="1">
    <location>
        <begin position="19"/>
        <end position="64"/>
    </location>
</feature>
<feature type="region of interest" description="Disordered" evidence="3">
    <location>
        <begin position="95"/>
        <end position="120"/>
    </location>
</feature>
<feature type="region of interest" description="Disordered" evidence="3">
    <location>
        <begin position="141"/>
        <end position="184"/>
    </location>
</feature>
<feature type="short sequence motif" description="Nuclear localization signal" evidence="2">
    <location>
        <begin position="4"/>
        <end position="13"/>
    </location>
</feature>
<feature type="compositionally biased region" description="Basic residues" evidence="3">
    <location>
        <begin position="1"/>
        <end position="10"/>
    </location>
</feature>
<feature type="compositionally biased region" description="Polar residues" evidence="3">
    <location>
        <begin position="25"/>
        <end position="35"/>
    </location>
</feature>
<feature type="compositionally biased region" description="Gly residues" evidence="3">
    <location>
        <begin position="166"/>
        <end position="183"/>
    </location>
</feature>
<feature type="binding site" evidence="1">
    <location>
        <position position="323"/>
    </location>
    <ligand>
        <name>Mg(2+)</name>
        <dbReference type="ChEBI" id="CHEBI:18420"/>
        <label>1</label>
    </ligand>
</feature>
<feature type="disulfide bond" evidence="1">
    <location>
        <begin position="633"/>
        <end position="637"/>
    </location>
</feature>
<feature type="splice variant" id="VSP_041138" description="In isoform VP2." evidence="4">
    <location>
        <begin position="1"/>
        <end position="143"/>
    </location>
</feature>
<feature type="strand" evidence="5">
    <location>
        <begin position="192"/>
        <end position="196"/>
    </location>
</feature>
<feature type="strand" evidence="5">
    <location>
        <begin position="198"/>
        <end position="215"/>
    </location>
</feature>
<feature type="strand" evidence="5">
    <location>
        <begin position="223"/>
        <end position="227"/>
    </location>
</feature>
<feature type="helix" evidence="5">
    <location>
        <begin position="230"/>
        <end position="233"/>
    </location>
</feature>
<feature type="helix" evidence="5">
    <location>
        <begin position="239"/>
        <end position="241"/>
    </location>
</feature>
<feature type="strand" evidence="5">
    <location>
        <begin position="245"/>
        <end position="254"/>
    </location>
</feature>
<feature type="helix" evidence="5">
    <location>
        <begin position="260"/>
        <end position="263"/>
    </location>
</feature>
<feature type="helix" evidence="5">
    <location>
        <begin position="266"/>
        <end position="275"/>
    </location>
</feature>
<feature type="strand" evidence="5">
    <location>
        <begin position="276"/>
        <end position="299"/>
    </location>
</feature>
<feature type="strand" evidence="5">
    <location>
        <begin position="305"/>
        <end position="310"/>
    </location>
</feature>
<feature type="strand" evidence="5">
    <location>
        <begin position="316"/>
        <end position="321"/>
    </location>
</feature>
<feature type="helix" evidence="5">
    <location>
        <begin position="331"/>
        <end position="334"/>
    </location>
</feature>
<feature type="strand" evidence="5">
    <location>
        <begin position="349"/>
        <end position="354"/>
    </location>
</feature>
<feature type="strand" evidence="5">
    <location>
        <begin position="358"/>
        <end position="361"/>
    </location>
</feature>
<feature type="strand" evidence="5">
    <location>
        <begin position="374"/>
        <end position="378"/>
    </location>
</feature>
<feature type="helix" evidence="5">
    <location>
        <begin position="381"/>
        <end position="383"/>
    </location>
</feature>
<feature type="helix" evidence="5">
    <location>
        <begin position="389"/>
        <end position="392"/>
    </location>
</feature>
<feature type="strand" evidence="5">
    <location>
        <begin position="395"/>
        <end position="398"/>
    </location>
</feature>
<feature type="strand" evidence="6">
    <location>
        <begin position="419"/>
        <end position="421"/>
    </location>
</feature>
<feature type="helix" evidence="5">
    <location>
        <begin position="425"/>
        <end position="427"/>
    </location>
</feature>
<feature type="turn" evidence="5">
    <location>
        <begin position="470"/>
        <end position="472"/>
    </location>
</feature>
<feature type="strand" evidence="5">
    <location>
        <begin position="476"/>
        <end position="480"/>
    </location>
</feature>
<feature type="strand" evidence="5">
    <location>
        <begin position="488"/>
        <end position="491"/>
    </location>
</feature>
<feature type="strand" evidence="5">
    <location>
        <begin position="494"/>
        <end position="497"/>
    </location>
</feature>
<feature type="strand" evidence="5">
    <location>
        <begin position="506"/>
        <end position="508"/>
    </location>
</feature>
<feature type="strand" evidence="5">
    <location>
        <begin position="510"/>
        <end position="513"/>
    </location>
</feature>
<feature type="strand" evidence="5">
    <location>
        <begin position="520"/>
        <end position="523"/>
    </location>
</feature>
<feature type="helix" evidence="5">
    <location>
        <begin position="525"/>
        <end position="527"/>
    </location>
</feature>
<feature type="strand" evidence="5">
    <location>
        <begin position="539"/>
        <end position="542"/>
    </location>
</feature>
<feature type="helix" evidence="5">
    <location>
        <begin position="553"/>
        <end position="555"/>
    </location>
</feature>
<feature type="helix" evidence="5">
    <location>
        <begin position="569"/>
        <end position="571"/>
    </location>
</feature>
<feature type="helix" evidence="5">
    <location>
        <begin position="587"/>
        <end position="589"/>
    </location>
</feature>
<feature type="strand" evidence="5">
    <location>
        <begin position="613"/>
        <end position="615"/>
    </location>
</feature>
<feature type="strand" evidence="5">
    <location>
        <begin position="619"/>
        <end position="621"/>
    </location>
</feature>
<feature type="strand" evidence="5">
    <location>
        <begin position="630"/>
        <end position="635"/>
    </location>
</feature>
<feature type="strand" evidence="5">
    <location>
        <begin position="640"/>
        <end position="645"/>
    </location>
</feature>
<feature type="strand" evidence="6">
    <location>
        <begin position="657"/>
        <end position="659"/>
    </location>
</feature>
<feature type="strand" evidence="5">
    <location>
        <begin position="666"/>
        <end position="682"/>
    </location>
</feature>
<feature type="strand" evidence="5">
    <location>
        <begin position="687"/>
        <end position="689"/>
    </location>
</feature>
<feature type="turn" evidence="5">
    <location>
        <begin position="698"/>
        <end position="700"/>
    </location>
</feature>
<feature type="helix" evidence="5">
    <location>
        <begin position="701"/>
        <end position="704"/>
    </location>
</feature>
<feature type="strand" evidence="5">
    <location>
        <begin position="721"/>
        <end position="723"/>
    </location>
</feature>
<organismHost>
    <name type="scientific">Canis lupus familiaris</name>
    <name type="common">Dog</name>
    <name type="synonym">Canis familiaris</name>
    <dbReference type="NCBI Taxonomy" id="9615"/>
</organismHost>
<organismHost>
    <name type="scientific">Felis catus</name>
    <name type="common">Cat</name>
    <name type="synonym">Felis silvestris catus</name>
    <dbReference type="NCBI Taxonomy" id="9685"/>
</organismHost>
<proteinExistence type="evidence at protein level"/>
<evidence type="ECO:0000250" key="1"/>
<evidence type="ECO:0000255" key="2"/>
<evidence type="ECO:0000256" key="3">
    <source>
        <dbReference type="SAM" id="MobiDB-lite"/>
    </source>
</evidence>
<evidence type="ECO:0000305" key="4"/>
<evidence type="ECO:0007829" key="5">
    <source>
        <dbReference type="PDB" id="2CAS"/>
    </source>
</evidence>
<evidence type="ECO:0007829" key="6">
    <source>
        <dbReference type="PDB" id="6OAS"/>
    </source>
</evidence>
<reference key="1">
    <citation type="journal article" date="1991" name="Virology">
        <title>Mapping specific functions in the capsid structure of canine parvovirus and feline panleukopenia virus using infectious plasmid clones.</title>
        <authorList>
            <person name="Parrish C.R."/>
        </authorList>
    </citation>
    <scope>NUCLEOTIDE SEQUENCE [GENOMIC DNA]</scope>
</reference>
<reference key="2">
    <citation type="journal article" date="1993" name="J. Mol. Biol.">
        <title>The canine parvovirus empty capsid structure.</title>
        <authorList>
            <person name="Wu H."/>
            <person name="Rossmann M.G."/>
        </authorList>
    </citation>
    <scope>X-RAY CRYSTALLOGRAPHY (3.0 ANGSTROMS) OF 180-727</scope>
</reference>
<protein>
    <recommendedName>
        <fullName>Capsid protein VP1</fullName>
    </recommendedName>
    <alternativeName>
        <fullName>Coat protein VP1</fullName>
    </alternativeName>
</protein>
<dbReference type="EMBL" id="M38245">
    <property type="protein sequence ID" value="AAB02799.1"/>
    <property type="molecule type" value="Genomic_DNA"/>
</dbReference>
<dbReference type="EMBL" id="M38245">
    <property type="protein sequence ID" value="AAB02800.1"/>
    <property type="molecule type" value="Genomic_DNA"/>
</dbReference>
<dbReference type="PDB" id="2CAS">
    <property type="method" value="X-ray"/>
    <property type="resolution" value="3.00 A"/>
    <property type="chains" value="A=180-727"/>
</dbReference>
<dbReference type="PDB" id="6OAS">
    <property type="method" value="EM"/>
    <property type="resolution" value="3.00 A"/>
    <property type="chains" value="1=180-727"/>
</dbReference>
<dbReference type="PDB" id="7UTP">
    <property type="method" value="EM"/>
    <property type="resolution" value="3.80 A"/>
    <property type="chains" value="A/B/C/D/E/F/G/I=180-727"/>
</dbReference>
<dbReference type="PDB" id="7UTR">
    <property type="method" value="EM"/>
    <property type="resolution" value="3.70 A"/>
    <property type="chains" value="A/B/C/D/E/F/G/I=180-727"/>
</dbReference>
<dbReference type="PDB" id="7UTS">
    <property type="method" value="EM"/>
    <property type="resolution" value="3.60 A"/>
    <property type="chains" value="A/B/C/D/E/F/G/I=180-727"/>
</dbReference>
<dbReference type="PDB" id="7UTV">
    <property type="method" value="EM"/>
    <property type="resolution" value="3.00 A"/>
    <property type="chains" value="A/B/C/D/E/F/G/I=180-727"/>
</dbReference>
<dbReference type="PDBsum" id="2CAS"/>
<dbReference type="PDBsum" id="6OAS"/>
<dbReference type="PDBsum" id="7UTP"/>
<dbReference type="PDBsum" id="7UTR"/>
<dbReference type="PDBsum" id="7UTS"/>
<dbReference type="PDBsum" id="7UTV"/>
<dbReference type="EMDB" id="EMD-20001"/>
<dbReference type="EMDB" id="EMD-26786"/>
<dbReference type="EMDB" id="EMD-26787"/>
<dbReference type="EMDB" id="EMD-26788"/>
<dbReference type="EMDB" id="EMD-26790"/>
<dbReference type="SMR" id="Q11213"/>
<dbReference type="ABCD" id="Q11213">
    <property type="antibodies" value="1 sequenced antibody"/>
</dbReference>
<dbReference type="EvolutionaryTrace" id="Q11213"/>
<dbReference type="GO" id="GO:0043657">
    <property type="term" value="C:host cell"/>
    <property type="evidence" value="ECO:0007669"/>
    <property type="project" value="GOC"/>
</dbReference>
<dbReference type="GO" id="GO:0042025">
    <property type="term" value="C:host cell nucleus"/>
    <property type="evidence" value="ECO:0007669"/>
    <property type="project" value="UniProtKB-SubCell"/>
</dbReference>
<dbReference type="GO" id="GO:0039615">
    <property type="term" value="C:T=1 icosahedral viral capsid"/>
    <property type="evidence" value="ECO:0007669"/>
    <property type="project" value="UniProtKB-KW"/>
</dbReference>
<dbReference type="GO" id="GO:0046872">
    <property type="term" value="F:metal ion binding"/>
    <property type="evidence" value="ECO:0007669"/>
    <property type="project" value="UniProtKB-KW"/>
</dbReference>
<dbReference type="GO" id="GO:0005198">
    <property type="term" value="F:structural molecule activity"/>
    <property type="evidence" value="ECO:0007669"/>
    <property type="project" value="InterPro"/>
</dbReference>
<dbReference type="GO" id="GO:0098671">
    <property type="term" value="P:adhesion receptor-mediated virion attachment to host cell"/>
    <property type="evidence" value="ECO:0007669"/>
    <property type="project" value="UniProtKB-KW"/>
</dbReference>
<dbReference type="GO" id="GO:0075512">
    <property type="term" value="P:clathrin-dependent endocytosis of virus by host cell"/>
    <property type="evidence" value="ECO:0007669"/>
    <property type="project" value="UniProtKB-KW"/>
</dbReference>
<dbReference type="GO" id="GO:0098670">
    <property type="term" value="P:entry receptor-mediated virion attachment to host cell"/>
    <property type="evidence" value="ECO:0007669"/>
    <property type="project" value="UniProtKB-KW"/>
</dbReference>
<dbReference type="GO" id="GO:0075521">
    <property type="term" value="P:microtubule-dependent intracellular transport of viral material towards nucleus"/>
    <property type="evidence" value="ECO:0007669"/>
    <property type="project" value="UniProtKB-KW"/>
</dbReference>
<dbReference type="GO" id="GO:0140267">
    <property type="term" value="P:symbiont entry into host cell via permeabilization of host membrane"/>
    <property type="evidence" value="ECO:0007669"/>
    <property type="project" value="UniProtKB-KW"/>
</dbReference>
<dbReference type="GO" id="GO:0075732">
    <property type="term" value="P:viral penetration into host nucleus"/>
    <property type="evidence" value="ECO:0007669"/>
    <property type="project" value="UniProtKB-KW"/>
</dbReference>
<dbReference type="Gene3D" id="2.170.30.10">
    <property type="entry name" value="Parvovirus coat protein VP1/VP2"/>
    <property type="match status" value="1"/>
</dbReference>
<dbReference type="InterPro" id="IPR016184">
    <property type="entry name" value="Capsid/spike_ssDNA_virus"/>
</dbReference>
<dbReference type="InterPro" id="IPR001403">
    <property type="entry name" value="Parvovirus_coat"/>
</dbReference>
<dbReference type="InterPro" id="IPR013607">
    <property type="entry name" value="Phospholipase_A2-like"/>
</dbReference>
<dbReference type="InterPro" id="IPR036952">
    <property type="entry name" value="VP1/VP2"/>
</dbReference>
<dbReference type="Pfam" id="PF00740">
    <property type="entry name" value="Parvo_coat"/>
    <property type="match status" value="1"/>
</dbReference>
<dbReference type="Pfam" id="PF08398">
    <property type="entry name" value="Phospholip_A2_4"/>
    <property type="match status" value="1"/>
</dbReference>
<dbReference type="SUPFAM" id="SSF88645">
    <property type="entry name" value="ssDNA viruses"/>
    <property type="match status" value="1"/>
</dbReference>
<organism>
    <name type="scientific">Canine parvovirus type 2 (isolate Dog/United States/CPV-b/1978)</name>
    <name type="common">CPV-2</name>
    <dbReference type="NCBI Taxonomy" id="59284"/>
    <lineage>
        <taxon>Viruses</taxon>
        <taxon>Monodnaviria</taxon>
        <taxon>Shotokuvirae</taxon>
        <taxon>Cossaviricota</taxon>
        <taxon>Quintoviricetes</taxon>
        <taxon>Piccovirales</taxon>
        <taxon>Parvoviridae</taxon>
        <taxon>Parvovirinae</taxon>
        <taxon>Protoparvovirus</taxon>
        <taxon>Protoparvovirus carnivoran1</taxon>
    </lineage>
</organism>
<sequence length="727" mass="80343">MAPPAKRARRGLVPPGYKYLGPGNSLDQGEPTNPSDAAAKEHDEAYAAYLRSGKNPYLYFSPADQRFIDQTKDAKDWGGKIGHYFFRAKKAIAPVLTDTPDHPSTSRPTKPTKRSKPPPHIFINLAKKKKAGAGQVKRDNLAPMSDGAVQPDGGQPAVRNERATGSGNGSGGGGGGGSGGVGISTGTFNNQTEFKFLENGWVEITANSSRLVHLNMPESENYRRVVVNNMDKTAVNGNMALDDIHAQIVTPWSLVDANAWGVWFNPGDWQLIVNTMSELHLVSFEQEIFNVVLKTVSESATQPPTKVYNNDLTASLMVALDSNNTMPFTPAAMRSETLGFYPWKPTIPTPWRYYFQWDRTLIPSHTGTSGTPTNIYHGTDPDDVQFYTIENSVPVHLLRTGDEFATGTFFFDCKPCRLTHTWQTNRALGLPPFLNSLPQSEGATNFGDIGVQQDKRRGVTQMGNTNYITEATIMRPAEVGYSAPYYSFEASTQGPFKTPIAAGRGGAQTDENQAADGNPRYAFGRQHGQKTTTTGETPERFTYIAHQDTGRYPEGDWIQNINFNLPVTNDNVLLPTDPIGGKTGINYTNIFNTYGPLTALNNVPPVYPNGQIWDKEFDTDLKPRLHVNAPFVCQNNCPGQLFVKVAPNLTNEYDPDASANMSRIVTYSDFWWKGKLVFKAKLRASHTWNPIQQMSINVDNQFNYVPSNIGGMKIVYEKSQLAPRKLY</sequence>